<gene>
    <name evidence="1" type="primary">acpP</name>
    <name type="ordered locus">E2348C_1186</name>
</gene>
<sequence>MSTIEERVKKIIGEQLGVKQEEVTNNASFVEDLGADSLDTVELVMALEEEFDTEIPDEEAEKITTVQAAIDYINGHQA</sequence>
<accession>B7UPB0</accession>
<organism>
    <name type="scientific">Escherichia coli O127:H6 (strain E2348/69 / EPEC)</name>
    <dbReference type="NCBI Taxonomy" id="574521"/>
    <lineage>
        <taxon>Bacteria</taxon>
        <taxon>Pseudomonadati</taxon>
        <taxon>Pseudomonadota</taxon>
        <taxon>Gammaproteobacteria</taxon>
        <taxon>Enterobacterales</taxon>
        <taxon>Enterobacteriaceae</taxon>
        <taxon>Escherichia</taxon>
    </lineage>
</organism>
<keyword id="KW-0963">Cytoplasm</keyword>
<keyword id="KW-0275">Fatty acid biosynthesis</keyword>
<keyword id="KW-0276">Fatty acid metabolism</keyword>
<keyword id="KW-0444">Lipid biosynthesis</keyword>
<keyword id="KW-0443">Lipid metabolism</keyword>
<keyword id="KW-0596">Phosphopantetheine</keyword>
<keyword id="KW-0597">Phosphoprotein</keyword>
<keyword id="KW-1185">Reference proteome</keyword>
<dbReference type="EMBL" id="FM180568">
    <property type="protein sequence ID" value="CAS08734.1"/>
    <property type="molecule type" value="Genomic_DNA"/>
</dbReference>
<dbReference type="RefSeq" id="WP_000103754.1">
    <property type="nucleotide sequence ID" value="NC_011601.1"/>
</dbReference>
<dbReference type="SMR" id="B7UPB0"/>
<dbReference type="GeneID" id="98387866"/>
<dbReference type="KEGG" id="ecg:E2348C_1186"/>
<dbReference type="HOGENOM" id="CLU_108696_5_1_6"/>
<dbReference type="UniPathway" id="UPA00094"/>
<dbReference type="Proteomes" id="UP000008205">
    <property type="component" value="Chromosome"/>
</dbReference>
<dbReference type="GO" id="GO:0005829">
    <property type="term" value="C:cytosol"/>
    <property type="evidence" value="ECO:0007669"/>
    <property type="project" value="TreeGrafter"/>
</dbReference>
<dbReference type="GO" id="GO:0016020">
    <property type="term" value="C:membrane"/>
    <property type="evidence" value="ECO:0007669"/>
    <property type="project" value="GOC"/>
</dbReference>
<dbReference type="GO" id="GO:0000035">
    <property type="term" value="F:acyl binding"/>
    <property type="evidence" value="ECO:0007669"/>
    <property type="project" value="TreeGrafter"/>
</dbReference>
<dbReference type="GO" id="GO:0000036">
    <property type="term" value="F:acyl carrier activity"/>
    <property type="evidence" value="ECO:0007669"/>
    <property type="project" value="UniProtKB-UniRule"/>
</dbReference>
<dbReference type="GO" id="GO:0009245">
    <property type="term" value="P:lipid A biosynthetic process"/>
    <property type="evidence" value="ECO:0007669"/>
    <property type="project" value="TreeGrafter"/>
</dbReference>
<dbReference type="FunFam" id="1.10.1200.10:FF:000001">
    <property type="entry name" value="Acyl carrier protein"/>
    <property type="match status" value="1"/>
</dbReference>
<dbReference type="Gene3D" id="1.10.1200.10">
    <property type="entry name" value="ACP-like"/>
    <property type="match status" value="1"/>
</dbReference>
<dbReference type="HAMAP" id="MF_01217">
    <property type="entry name" value="Acyl_carrier"/>
    <property type="match status" value="1"/>
</dbReference>
<dbReference type="InterPro" id="IPR003231">
    <property type="entry name" value="ACP"/>
</dbReference>
<dbReference type="InterPro" id="IPR036736">
    <property type="entry name" value="ACP-like_sf"/>
</dbReference>
<dbReference type="InterPro" id="IPR009081">
    <property type="entry name" value="PP-bd_ACP"/>
</dbReference>
<dbReference type="InterPro" id="IPR006162">
    <property type="entry name" value="Ppantetheine_attach_site"/>
</dbReference>
<dbReference type="NCBIfam" id="TIGR00517">
    <property type="entry name" value="acyl_carrier"/>
    <property type="match status" value="1"/>
</dbReference>
<dbReference type="NCBIfam" id="NF002148">
    <property type="entry name" value="PRK00982.1-2"/>
    <property type="match status" value="1"/>
</dbReference>
<dbReference type="NCBIfam" id="NF002149">
    <property type="entry name" value="PRK00982.1-3"/>
    <property type="match status" value="1"/>
</dbReference>
<dbReference type="NCBIfam" id="NF002150">
    <property type="entry name" value="PRK00982.1-4"/>
    <property type="match status" value="1"/>
</dbReference>
<dbReference type="NCBIfam" id="NF002151">
    <property type="entry name" value="PRK00982.1-5"/>
    <property type="match status" value="1"/>
</dbReference>
<dbReference type="PANTHER" id="PTHR20863">
    <property type="entry name" value="ACYL CARRIER PROTEIN"/>
    <property type="match status" value="1"/>
</dbReference>
<dbReference type="PANTHER" id="PTHR20863:SF76">
    <property type="entry name" value="CARRIER DOMAIN-CONTAINING PROTEIN"/>
    <property type="match status" value="1"/>
</dbReference>
<dbReference type="Pfam" id="PF00550">
    <property type="entry name" value="PP-binding"/>
    <property type="match status" value="1"/>
</dbReference>
<dbReference type="SUPFAM" id="SSF47336">
    <property type="entry name" value="ACP-like"/>
    <property type="match status" value="1"/>
</dbReference>
<dbReference type="PROSITE" id="PS50075">
    <property type="entry name" value="CARRIER"/>
    <property type="match status" value="1"/>
</dbReference>
<dbReference type="PROSITE" id="PS00012">
    <property type="entry name" value="PHOSPHOPANTETHEINE"/>
    <property type="match status" value="1"/>
</dbReference>
<protein>
    <recommendedName>
        <fullName evidence="1">Acyl carrier protein</fullName>
        <shortName evidence="1">ACP</shortName>
    </recommendedName>
</protein>
<evidence type="ECO:0000255" key="1">
    <source>
        <dbReference type="HAMAP-Rule" id="MF_01217"/>
    </source>
</evidence>
<evidence type="ECO:0000255" key="2">
    <source>
        <dbReference type="PROSITE-ProRule" id="PRU00258"/>
    </source>
</evidence>
<feature type="chain" id="PRO_1000164785" description="Acyl carrier protein">
    <location>
        <begin position="1"/>
        <end position="78"/>
    </location>
</feature>
<feature type="domain" description="Carrier" evidence="2">
    <location>
        <begin position="2"/>
        <end position="77"/>
    </location>
</feature>
<feature type="modified residue" description="O-(pantetheine 4'-phosphoryl)serine" evidence="2">
    <location>
        <position position="37"/>
    </location>
</feature>
<comment type="function">
    <text evidence="1">Carrier of the growing fatty acid chain in fatty acid biosynthesis.</text>
</comment>
<comment type="pathway">
    <text evidence="1">Lipid metabolism; fatty acid biosynthesis.</text>
</comment>
<comment type="subcellular location">
    <subcellularLocation>
        <location evidence="1">Cytoplasm</location>
    </subcellularLocation>
</comment>
<comment type="PTM">
    <text evidence="1">4'-phosphopantetheine is transferred from CoA to a specific serine of apo-ACP by AcpS. This modification is essential for activity because fatty acids are bound in thioester linkage to the sulfhydryl of the prosthetic group.</text>
</comment>
<comment type="similarity">
    <text evidence="1">Belongs to the acyl carrier protein (ACP) family.</text>
</comment>
<reference key="1">
    <citation type="journal article" date="2009" name="J. Bacteriol.">
        <title>Complete genome sequence and comparative genome analysis of enteropathogenic Escherichia coli O127:H6 strain E2348/69.</title>
        <authorList>
            <person name="Iguchi A."/>
            <person name="Thomson N.R."/>
            <person name="Ogura Y."/>
            <person name="Saunders D."/>
            <person name="Ooka T."/>
            <person name="Henderson I.R."/>
            <person name="Harris D."/>
            <person name="Asadulghani M."/>
            <person name="Kurokawa K."/>
            <person name="Dean P."/>
            <person name="Kenny B."/>
            <person name="Quail M.A."/>
            <person name="Thurston S."/>
            <person name="Dougan G."/>
            <person name="Hayashi T."/>
            <person name="Parkhill J."/>
            <person name="Frankel G."/>
        </authorList>
    </citation>
    <scope>NUCLEOTIDE SEQUENCE [LARGE SCALE GENOMIC DNA]</scope>
    <source>
        <strain>E2348/69 / EPEC</strain>
    </source>
</reference>
<name>ACP_ECO27</name>
<proteinExistence type="inferred from homology"/>